<sequence>MGALRIDSHQHFWRYRAADYPWIGAGMGVLARDYLPDALHPLMHAQALGASIAVQARAGRDETAFLLELACDEARIAAVVGWEDLRAPQLAERVAEWRGTKLRGFRHQLQDEADVRAFVDDADFARGVAWLQANDYVYDVLVFERQLPDVQAFCARHDAHWLVLDHAGKPALAEFDRDDTALARWRAALRELAALPHVVCKLSGLVTEADWRRGLRASDLRHIEQCLDAALDAFGPQRLMFGSDWPVCLLAASYDEVASLVERWAESRLSAAERSALWGGTAARCYALPEPADARL</sequence>
<name>FCNLN_BURM1</name>
<gene>
    <name evidence="4" type="ordered locus">BMULJ_04915</name>
</gene>
<feature type="chain" id="PRO_0000458157" description="L-fucono-1,5-lactonase">
    <location>
        <begin position="1"/>
        <end position="296"/>
    </location>
</feature>
<feature type="strand" evidence="10">
    <location>
        <begin position="6"/>
        <end position="10"/>
    </location>
</feature>
<feature type="helix" evidence="10">
    <location>
        <begin position="17"/>
        <end position="19"/>
    </location>
</feature>
<feature type="helix" evidence="10">
    <location>
        <begin position="28"/>
        <end position="30"/>
    </location>
</feature>
<feature type="helix" evidence="10">
    <location>
        <begin position="36"/>
        <end position="45"/>
    </location>
</feature>
<feature type="strand" evidence="10">
    <location>
        <begin position="50"/>
        <end position="54"/>
    </location>
</feature>
<feature type="strand" evidence="10">
    <location>
        <begin position="57"/>
        <end position="59"/>
    </location>
</feature>
<feature type="helix" evidence="10">
    <location>
        <begin position="60"/>
        <end position="70"/>
    </location>
</feature>
<feature type="strand" evidence="10">
    <location>
        <begin position="76"/>
        <end position="81"/>
    </location>
</feature>
<feature type="helix" evidence="10">
    <location>
        <begin position="90"/>
        <end position="94"/>
    </location>
</feature>
<feature type="turn" evidence="9">
    <location>
        <begin position="96"/>
        <end position="99"/>
    </location>
</feature>
<feature type="strand" evidence="10">
    <location>
        <begin position="102"/>
        <end position="106"/>
    </location>
</feature>
<feature type="helix" evidence="10">
    <location>
        <begin position="109"/>
        <end position="111"/>
    </location>
</feature>
<feature type="helix" evidence="10">
    <location>
        <begin position="115"/>
        <end position="120"/>
    </location>
</feature>
<feature type="helix" evidence="10">
    <location>
        <begin position="122"/>
        <end position="133"/>
    </location>
</feature>
<feature type="strand" evidence="10">
    <location>
        <begin position="137"/>
        <end position="140"/>
    </location>
</feature>
<feature type="helix" evidence="10">
    <location>
        <begin position="144"/>
        <end position="146"/>
    </location>
</feature>
<feature type="helix" evidence="10">
    <location>
        <begin position="147"/>
        <end position="156"/>
    </location>
</feature>
<feature type="strand" evidence="10">
    <location>
        <begin position="162"/>
        <end position="164"/>
    </location>
</feature>
<feature type="helix" evidence="10">
    <location>
        <begin position="165"/>
        <end position="168"/>
    </location>
</feature>
<feature type="helix" evidence="10">
    <location>
        <begin position="172"/>
        <end position="174"/>
    </location>
</feature>
<feature type="turn" evidence="9">
    <location>
        <begin position="175"/>
        <end position="177"/>
    </location>
</feature>
<feature type="helix" evidence="10">
    <location>
        <begin position="181"/>
        <end position="193"/>
    </location>
</feature>
<feature type="strand" evidence="10">
    <location>
        <begin position="198"/>
        <end position="202"/>
    </location>
</feature>
<feature type="helix" evidence="10">
    <location>
        <begin position="206"/>
        <end position="208"/>
    </location>
</feature>
<feature type="turn" evidence="10">
    <location>
        <begin position="211"/>
        <end position="213"/>
    </location>
</feature>
<feature type="helix" evidence="10">
    <location>
        <begin position="217"/>
        <end position="234"/>
    </location>
</feature>
<feature type="helix" evidence="10">
    <location>
        <begin position="236"/>
        <end position="238"/>
    </location>
</feature>
<feature type="strand" evidence="10">
    <location>
        <begin position="239"/>
        <end position="241"/>
    </location>
</feature>
<feature type="helix" evidence="10">
    <location>
        <begin position="247"/>
        <end position="250"/>
    </location>
</feature>
<feature type="helix" evidence="10">
    <location>
        <begin position="254"/>
        <end position="268"/>
    </location>
</feature>
<feature type="helix" evidence="10">
    <location>
        <begin position="271"/>
        <end position="277"/>
    </location>
</feature>
<feature type="helix" evidence="10">
    <location>
        <begin position="280"/>
        <end position="285"/>
    </location>
</feature>
<proteinExistence type="evidence at protein level"/>
<organism>
    <name type="scientific">Burkholderia multivorans (strain ATCC 17616 / 249)</name>
    <dbReference type="NCBI Taxonomy" id="395019"/>
    <lineage>
        <taxon>Bacteria</taxon>
        <taxon>Pseudomonadati</taxon>
        <taxon>Pseudomonadota</taxon>
        <taxon>Betaproteobacteria</taxon>
        <taxon>Burkholderiales</taxon>
        <taxon>Burkholderiaceae</taxon>
        <taxon>Burkholderia</taxon>
        <taxon>Burkholderia cepacia complex</taxon>
    </lineage>
</organism>
<accession>A0A0H3KNC4</accession>
<dbReference type="EC" id="3.1.1.120" evidence="1"/>
<dbReference type="EMBL" id="AP009386">
    <property type="protein sequence ID" value="BAG46761.1"/>
    <property type="molecule type" value="Genomic_DNA"/>
</dbReference>
<dbReference type="RefSeq" id="WP_012216497.1">
    <property type="nucleotide sequence ID" value="NC_010086.1"/>
</dbReference>
<dbReference type="PDB" id="4DLF">
    <property type="method" value="X-ray"/>
    <property type="resolution" value="1.93 A"/>
    <property type="chains" value="A=1-296"/>
</dbReference>
<dbReference type="PDB" id="4DLM">
    <property type="method" value="X-ray"/>
    <property type="resolution" value="1.93 A"/>
    <property type="chains" value="A=1-296"/>
</dbReference>
<dbReference type="PDB" id="4DNM">
    <property type="method" value="X-ray"/>
    <property type="resolution" value="2.15 A"/>
    <property type="chains" value="A=1-296"/>
</dbReference>
<dbReference type="PDB" id="4DO7">
    <property type="method" value="X-ray"/>
    <property type="resolution" value="1.70 A"/>
    <property type="chains" value="A/B=1-296"/>
</dbReference>
<dbReference type="PDBsum" id="4DLF"/>
<dbReference type="PDBsum" id="4DLM"/>
<dbReference type="PDBsum" id="4DNM"/>
<dbReference type="PDBsum" id="4DO7"/>
<dbReference type="SMR" id="A0A0H3KNC4"/>
<dbReference type="STRING" id="395019.BMULJ_04915"/>
<dbReference type="KEGG" id="bmj:BMULJ_04915"/>
<dbReference type="KEGG" id="bmu:Bmul_3602"/>
<dbReference type="eggNOG" id="COG3618">
    <property type="taxonomic scope" value="Bacteria"/>
</dbReference>
<dbReference type="HOGENOM" id="CLU_044590_3_0_4"/>
<dbReference type="BioCyc" id="MetaCyc:MONOMER-21809"/>
<dbReference type="UniPathway" id="UPA00563"/>
<dbReference type="EvolutionaryTrace" id="A0A0H3KNC4"/>
<dbReference type="Proteomes" id="UP000008815">
    <property type="component" value="Chromosome 2"/>
</dbReference>
<dbReference type="GO" id="GO:0016787">
    <property type="term" value="F:hydrolase activity"/>
    <property type="evidence" value="ECO:0007669"/>
    <property type="project" value="UniProtKB-KW"/>
</dbReference>
<dbReference type="GO" id="GO:0019317">
    <property type="term" value="P:fucose catabolic process"/>
    <property type="evidence" value="ECO:0007669"/>
    <property type="project" value="UniProtKB-UniPathway"/>
</dbReference>
<dbReference type="Gene3D" id="3.20.20.140">
    <property type="entry name" value="Metal-dependent hydrolases"/>
    <property type="match status" value="1"/>
</dbReference>
<dbReference type="InterPro" id="IPR006680">
    <property type="entry name" value="Amidohydro-rel"/>
</dbReference>
<dbReference type="InterPro" id="IPR032466">
    <property type="entry name" value="Metal_Hydrolase"/>
</dbReference>
<dbReference type="InterPro" id="IPR052350">
    <property type="entry name" value="Metallo-dep_Lactonases"/>
</dbReference>
<dbReference type="PANTHER" id="PTHR43569">
    <property type="entry name" value="AMIDOHYDROLASE"/>
    <property type="match status" value="1"/>
</dbReference>
<dbReference type="PANTHER" id="PTHR43569:SF2">
    <property type="entry name" value="AMIDOHYDROLASE-RELATED DOMAIN-CONTAINING PROTEIN"/>
    <property type="match status" value="1"/>
</dbReference>
<dbReference type="Pfam" id="PF04909">
    <property type="entry name" value="Amidohydro_2"/>
    <property type="match status" value="1"/>
</dbReference>
<dbReference type="SUPFAM" id="SSF51556">
    <property type="entry name" value="Metallo-dependent hydrolases"/>
    <property type="match status" value="1"/>
</dbReference>
<protein>
    <recommendedName>
        <fullName evidence="2">L-fucono-1,5-lactonase</fullName>
        <ecNumber evidence="1">3.1.1.120</ecNumber>
    </recommendedName>
    <alternativeName>
        <fullName evidence="2">Fuconolactonase</fullName>
    </alternativeName>
</protein>
<evidence type="ECO:0000269" key="1">
    <source>
    </source>
</evidence>
<evidence type="ECO:0000303" key="2">
    <source>
    </source>
</evidence>
<evidence type="ECO:0000305" key="3"/>
<evidence type="ECO:0000312" key="4">
    <source>
        <dbReference type="EMBL" id="BAG46761.1"/>
    </source>
</evidence>
<evidence type="ECO:0007744" key="5">
    <source>
        <dbReference type="PDB" id="4DLF"/>
    </source>
</evidence>
<evidence type="ECO:0007744" key="6">
    <source>
        <dbReference type="PDB" id="4DLM"/>
    </source>
</evidence>
<evidence type="ECO:0007744" key="7">
    <source>
        <dbReference type="PDB" id="4DNM"/>
    </source>
</evidence>
<evidence type="ECO:0007744" key="8">
    <source>
        <dbReference type="PDB" id="4DO7"/>
    </source>
</evidence>
<evidence type="ECO:0007829" key="9">
    <source>
        <dbReference type="PDB" id="4DLF"/>
    </source>
</evidence>
<evidence type="ECO:0007829" key="10">
    <source>
        <dbReference type="PDB" id="4DO7"/>
    </source>
</evidence>
<keyword id="KW-0002">3D-structure</keyword>
<keyword id="KW-0119">Carbohydrate metabolism</keyword>
<keyword id="KW-0294">Fucose metabolism</keyword>
<keyword id="KW-0378">Hydrolase</keyword>
<keyword id="KW-1185">Reference proteome</keyword>
<comment type="function">
    <text evidence="1">L-fucono-1,5-lactonase involved in an L-fucose degradation pathway (PubMed:23214453). Catalyzes the hydrolysis of L-fucono-1,5-lactone to L-fuconate (PubMed:23214453). L-fucono-1,5-lactone is the best substrate, but the enzyme can also hydrolyze L-fucono-1,4-lactone, L-galactono-1,4-lactone D-arabinono-1,4-lactone and L-xylono-1,4-lactone (PubMed:23214453).</text>
</comment>
<comment type="catalytic activity">
    <reaction evidence="1">
        <text>L-fucono-1,5-lactone + H2O = L-fuconate + H(+)</text>
        <dbReference type="Rhea" id="RHEA:75219"/>
        <dbReference type="ChEBI" id="CHEBI:15377"/>
        <dbReference type="ChEBI" id="CHEBI:15378"/>
        <dbReference type="ChEBI" id="CHEBI:21291"/>
        <dbReference type="ChEBI" id="CHEBI:81457"/>
        <dbReference type="EC" id="3.1.1.120"/>
    </reaction>
    <physiologicalReaction direction="left-to-right" evidence="1">
        <dbReference type="Rhea" id="RHEA:75220"/>
    </physiologicalReaction>
</comment>
<comment type="catalytic activity">
    <reaction evidence="1">
        <text>L-fucono-1,4-lactone + H2O = L-fuconate + H(+)</text>
        <dbReference type="Rhea" id="RHEA:75223"/>
        <dbReference type="ChEBI" id="CHEBI:15377"/>
        <dbReference type="ChEBI" id="CHEBI:15378"/>
        <dbReference type="ChEBI" id="CHEBI:21291"/>
        <dbReference type="ChEBI" id="CHEBI:189082"/>
        <dbReference type="EC" id="3.1.1.120"/>
    </reaction>
</comment>
<comment type="catalytic activity">
    <reaction evidence="1">
        <text>D-arabinono-1,4-lactone + H2O = D-arabinonate + H(+)</text>
        <dbReference type="Rhea" id="RHEA:23108"/>
        <dbReference type="ChEBI" id="CHEBI:15377"/>
        <dbReference type="ChEBI" id="CHEBI:15378"/>
        <dbReference type="ChEBI" id="CHEBI:16157"/>
        <dbReference type="ChEBI" id="CHEBI:16292"/>
        <dbReference type="EC" id="3.1.1.120"/>
    </reaction>
</comment>
<comment type="catalytic activity">
    <reaction evidence="1">
        <text>L-xylono-1,4-lactone + H2O = L-xylonate + H(+)</text>
        <dbReference type="Rhea" id="RHEA:75227"/>
        <dbReference type="ChEBI" id="CHEBI:15377"/>
        <dbReference type="ChEBI" id="CHEBI:15378"/>
        <dbReference type="ChEBI" id="CHEBI:18118"/>
        <dbReference type="ChEBI" id="CHEBI:28146"/>
        <dbReference type="EC" id="3.1.1.120"/>
    </reaction>
</comment>
<comment type="catalytic activity">
    <reaction evidence="1">
        <text>L-galactono-1,4-lactone + H2O = L-galactonate + H(+)</text>
        <dbReference type="Rhea" id="RHEA:75231"/>
        <dbReference type="ChEBI" id="CHEBI:15377"/>
        <dbReference type="ChEBI" id="CHEBI:15378"/>
        <dbReference type="ChEBI" id="CHEBI:17464"/>
        <dbReference type="ChEBI" id="CHEBI:53071"/>
        <dbReference type="EC" id="3.1.1.120"/>
    </reaction>
</comment>
<comment type="cofactor">
    <text evidence="1">Does not require a divalent metal for activity (PubMed:23214453). The purified enzyme contains Zn(2+), but the addition of chelators does not diminish the catalytic activity of the enzyme, indicating that it does not require a divalent cation for substrate turnover (PubMed:23214453).</text>
</comment>
<comment type="biophysicochemical properties">
    <kinetics>
        <KM evidence="1">1.4 mM for L-fucono-1,4-lactone (at pH 8.3)</KM>
        <KM evidence="1">0.6 mM for L-fucono-1,4-lactone (at pH 7.1)</KM>
        <KM evidence="1">1.1 mM for L-galactono-1,4-lactone (at pH 8.3)</KM>
        <KM evidence="1">1.3 mM for L-galactono-1,4-lactone (at pH 7.1)</KM>
        <KM evidence="1">0.7 mM for D-arabinono-1,4-lactone (at pH 8.3)</KM>
        <KM evidence="1">1 mM for D-arabinono-1,4-lactone (at pH 7.1)</KM>
        <KM evidence="1">1.5 mM for L-xylono-1,4-lactone (at pH 8.3)</KM>
        <KM evidence="1">0.13 mM for 4-deoxy-L-fucono-1,5-lactone (at pH 7.1)</KM>
        <text evidence="1">kcat is 140 sec(-1) with L-fucono-1,4-lactone as substrate (at pH 8.3). kcat is 4.0 sec(-1) with L-fucono-1,4-lactone as substrate (at pH 7.1). kcat is 32 sec(-1) with L-galactono-1,4-lactone as substrate (at pH 8.3). kcat is 6.0 sec(-1) with L-galactono-1,4-lactone as substrate (at pH 7.1). kcat is 59 sec(-1) with D-arabinono-1,4-lactone as substrate (at pH 8.3). kcat is 2.0 sec(-1) with D-arabinono-1,4-lactone as substrate (at pH 7.1). kcat is 14 sec(-1) with L-xylono-1,4-lactone as substrate (at pH 8.3). kcat is 994 sec(-1) with 4-deoxy-L-fucono-1,5-lactone as substrate (at pH 7.1).</text>
    </kinetics>
</comment>
<comment type="pathway">
    <text evidence="1">Carbohydrate degradation; L-fucose degradation.</text>
</comment>
<comment type="subunit">
    <text evidence="1">Monomer.</text>
</comment>
<comment type="miscellaneous">
    <text evidence="1">It was not possible to determine the kinetic constants for the hydrolysis of L-fucono-1,5-lactone because of chemical instability, and thus, a stable mimic (4-deoxy-L-fucono-1,5-lactone) was utilized.</text>
</comment>
<comment type="similarity">
    <text evidence="3">Belongs to the metallo-dependent hydrolases superfamily.</text>
</comment>
<reference key="1">
    <citation type="submission" date="2007-04" db="EMBL/GenBank/DDBJ databases">
        <title>Complete genome sequence of Burkholderia multivorans ATCC 17616.</title>
        <authorList>
            <person name="Ohtsubo Y."/>
            <person name="Yamashita A."/>
            <person name="Kurokawa K."/>
            <person name="Takami H."/>
            <person name="Yuhara S."/>
            <person name="Nishiyama E."/>
            <person name="Endo R."/>
            <person name="Miyazaki R."/>
            <person name="Ono A."/>
            <person name="Yano K."/>
            <person name="Ito M."/>
            <person name="Sota M."/>
            <person name="Yuji N."/>
            <person name="Hattori M."/>
            <person name="Tsuda M."/>
        </authorList>
    </citation>
    <scope>NUCLEOTIDE SEQUENCE [LARGE SCALE GENOMIC DNA]</scope>
    <source>
        <strain>ATCC 17616 / 249</strain>
    </source>
</reference>
<reference evidence="5 6 7 8" key="2">
    <citation type="journal article" date="2013" name="Biochemistry">
        <title>Discovery of an L-fucono-1,5-lactonase from cog3618 of the amidohydrolase superfamily.</title>
        <authorList>
            <person name="Hobbs M.E."/>
            <person name="Vetting M."/>
            <person name="Williams H.J."/>
            <person name="Narindoshvili T."/>
            <person name="Kebodeaux D.M."/>
            <person name="Hillerich B."/>
            <person name="Seidel R.D."/>
            <person name="Almo S.C."/>
            <person name="Raushel F.M."/>
        </authorList>
    </citation>
    <scope>X-RAY CRYSTALLOGRAPHY (1.70 ANGSTROMS)</scope>
    <scope>FUNCTION</scope>
    <scope>CATALYTIC ACTIVITY</scope>
    <scope>COFACTOR</scope>
    <scope>BIOPHYSICOCHEMICAL PROPERTIES</scope>
    <scope>PATHWAY</scope>
    <scope>SUBUNIT</scope>
    <source>
        <strain>ATCC 17616 / 249</strain>
    </source>
</reference>